<evidence type="ECO:0000255" key="1">
    <source>
        <dbReference type="PROSITE-ProRule" id="PRU01147"/>
    </source>
</evidence>
<evidence type="ECO:0000269" key="2">
    <source>
    </source>
</evidence>
<evidence type="ECO:0000303" key="3">
    <source>
    </source>
</evidence>
<evidence type="ECO:0000305" key="4"/>
<evidence type="ECO:0000312" key="5">
    <source>
        <dbReference type="Araport" id="AT4G18650"/>
    </source>
</evidence>
<evidence type="ECO:0000312" key="6">
    <source>
        <dbReference type="EMBL" id="AAO41945.1"/>
    </source>
</evidence>
<evidence type="ECO:0000312" key="7">
    <source>
        <dbReference type="EMBL" id="CAB37450.1"/>
    </source>
</evidence>
<organism evidence="6">
    <name type="scientific">Arabidopsis thaliana</name>
    <name type="common">Mouse-ear cress</name>
    <dbReference type="NCBI Taxonomy" id="3702"/>
    <lineage>
        <taxon>Eukaryota</taxon>
        <taxon>Viridiplantae</taxon>
        <taxon>Streptophyta</taxon>
        <taxon>Embryophyta</taxon>
        <taxon>Tracheophyta</taxon>
        <taxon>Spermatophyta</taxon>
        <taxon>Magnoliopsida</taxon>
        <taxon>eudicotyledons</taxon>
        <taxon>Gunneridae</taxon>
        <taxon>Pentapetalae</taxon>
        <taxon>rosids</taxon>
        <taxon>malvids</taxon>
        <taxon>Brassicales</taxon>
        <taxon>Brassicaceae</taxon>
        <taxon>Camelineae</taxon>
        <taxon>Arabidopsis</taxon>
    </lineage>
</organism>
<accession>Q84JC2</accession>
<accession>Q9SN48</accession>
<dbReference type="EMBL" id="AL035526">
    <property type="protein sequence ID" value="CAB37450.1"/>
    <property type="status" value="ALT_INIT"/>
    <property type="molecule type" value="Genomic_DNA"/>
</dbReference>
<dbReference type="EMBL" id="AL161549">
    <property type="protein sequence ID" value="CAB78867.1"/>
    <property type="status" value="ALT_INIT"/>
    <property type="molecule type" value="Genomic_DNA"/>
</dbReference>
<dbReference type="EMBL" id="CP002687">
    <property type="protein sequence ID" value="AEE84072.1"/>
    <property type="molecule type" value="Genomic_DNA"/>
</dbReference>
<dbReference type="EMBL" id="BT003897">
    <property type="protein sequence ID" value="AAO41945.1"/>
    <property type="molecule type" value="mRNA"/>
</dbReference>
<dbReference type="EMBL" id="BT005177">
    <property type="protein sequence ID" value="AAO50710.1"/>
    <property type="molecule type" value="mRNA"/>
</dbReference>
<dbReference type="PIR" id="T04857">
    <property type="entry name" value="T04857"/>
</dbReference>
<dbReference type="RefSeq" id="NP_193600.2">
    <property type="nucleotide sequence ID" value="NM_117981.3"/>
</dbReference>
<dbReference type="SMR" id="Q84JC2"/>
<dbReference type="IntAct" id="Q84JC2">
    <property type="interactions" value="5"/>
</dbReference>
<dbReference type="STRING" id="3702.Q84JC2"/>
<dbReference type="PaxDb" id="3702-AT4G18650.1"/>
<dbReference type="EnsemblPlants" id="AT4G18650.1">
    <property type="protein sequence ID" value="AT4G18650.1"/>
    <property type="gene ID" value="AT4G18650"/>
</dbReference>
<dbReference type="GeneID" id="827599"/>
<dbReference type="Gramene" id="AT4G18650.1">
    <property type="protein sequence ID" value="AT4G18650.1"/>
    <property type="gene ID" value="AT4G18650"/>
</dbReference>
<dbReference type="KEGG" id="ath:AT4G18650"/>
<dbReference type="Araport" id="AT4G18650"/>
<dbReference type="TAIR" id="AT4G18650">
    <property type="gene designation" value="DOGL4"/>
</dbReference>
<dbReference type="eggNOG" id="ENOG502QRBI">
    <property type="taxonomic scope" value="Eukaryota"/>
</dbReference>
<dbReference type="HOGENOM" id="CLU_024782_2_1_1"/>
<dbReference type="InParanoid" id="Q84JC2"/>
<dbReference type="OMA" id="TTHHKAY"/>
<dbReference type="PhylomeDB" id="Q84JC2"/>
<dbReference type="PRO" id="PR:Q84JC2"/>
<dbReference type="Proteomes" id="UP000006548">
    <property type="component" value="Chromosome 4"/>
</dbReference>
<dbReference type="ExpressionAtlas" id="Q84JC2">
    <property type="expression patterns" value="baseline and differential"/>
</dbReference>
<dbReference type="GO" id="GO:0043565">
    <property type="term" value="F:sequence-specific DNA binding"/>
    <property type="evidence" value="ECO:0007669"/>
    <property type="project" value="InterPro"/>
</dbReference>
<dbReference type="GO" id="GO:0006351">
    <property type="term" value="P:DNA-templated transcription"/>
    <property type="evidence" value="ECO:0007669"/>
    <property type="project" value="InterPro"/>
</dbReference>
<dbReference type="InterPro" id="IPR051886">
    <property type="entry name" value="Seed_Dev/Stress_Resp_Reg"/>
</dbReference>
<dbReference type="InterPro" id="IPR025422">
    <property type="entry name" value="TGA_domain"/>
</dbReference>
<dbReference type="PANTHER" id="PTHR46354">
    <property type="entry name" value="DOG1 DOMAIN-CONTAINING PROTEIN"/>
    <property type="match status" value="1"/>
</dbReference>
<dbReference type="PANTHER" id="PTHR46354:SF2">
    <property type="entry name" value="PROTEIN DOG1-LIKE 4"/>
    <property type="match status" value="1"/>
</dbReference>
<dbReference type="Pfam" id="PF14144">
    <property type="entry name" value="DOG1"/>
    <property type="match status" value="1"/>
</dbReference>
<dbReference type="PROSITE" id="PS51806">
    <property type="entry name" value="DOG1"/>
    <property type="match status" value="1"/>
</dbReference>
<reference key="1">
    <citation type="journal article" date="1999" name="Nature">
        <title>Sequence and analysis of chromosome 4 of the plant Arabidopsis thaliana.</title>
        <authorList>
            <person name="Mayer K.F.X."/>
            <person name="Schueller C."/>
            <person name="Wambutt R."/>
            <person name="Murphy G."/>
            <person name="Volckaert G."/>
            <person name="Pohl T."/>
            <person name="Duesterhoeft A."/>
            <person name="Stiekema W."/>
            <person name="Entian K.-D."/>
            <person name="Terryn N."/>
            <person name="Harris B."/>
            <person name="Ansorge W."/>
            <person name="Brandt P."/>
            <person name="Grivell L.A."/>
            <person name="Rieger M."/>
            <person name="Weichselgartner M."/>
            <person name="de Simone V."/>
            <person name="Obermaier B."/>
            <person name="Mache R."/>
            <person name="Mueller M."/>
            <person name="Kreis M."/>
            <person name="Delseny M."/>
            <person name="Puigdomenech P."/>
            <person name="Watson M."/>
            <person name="Schmidtheini T."/>
            <person name="Reichert B."/>
            <person name="Portetelle D."/>
            <person name="Perez-Alonso M."/>
            <person name="Boutry M."/>
            <person name="Bancroft I."/>
            <person name="Vos P."/>
            <person name="Hoheisel J."/>
            <person name="Zimmermann W."/>
            <person name="Wedler H."/>
            <person name="Ridley P."/>
            <person name="Langham S.-A."/>
            <person name="McCullagh B."/>
            <person name="Bilham L."/>
            <person name="Robben J."/>
            <person name="van der Schueren J."/>
            <person name="Grymonprez B."/>
            <person name="Chuang Y.-J."/>
            <person name="Vandenbussche F."/>
            <person name="Braeken M."/>
            <person name="Weltjens I."/>
            <person name="Voet M."/>
            <person name="Bastiaens I."/>
            <person name="Aert R."/>
            <person name="Defoor E."/>
            <person name="Weitzenegger T."/>
            <person name="Bothe G."/>
            <person name="Ramsperger U."/>
            <person name="Hilbert H."/>
            <person name="Braun M."/>
            <person name="Holzer E."/>
            <person name="Brandt A."/>
            <person name="Peters S."/>
            <person name="van Staveren M."/>
            <person name="Dirkse W."/>
            <person name="Mooijman P."/>
            <person name="Klein Lankhorst R."/>
            <person name="Rose M."/>
            <person name="Hauf J."/>
            <person name="Koetter P."/>
            <person name="Berneiser S."/>
            <person name="Hempel S."/>
            <person name="Feldpausch M."/>
            <person name="Lamberth S."/>
            <person name="Van den Daele H."/>
            <person name="De Keyser A."/>
            <person name="Buysshaert C."/>
            <person name="Gielen J."/>
            <person name="Villarroel R."/>
            <person name="De Clercq R."/>
            <person name="van Montagu M."/>
            <person name="Rogers J."/>
            <person name="Cronin A."/>
            <person name="Quail M.A."/>
            <person name="Bray-Allen S."/>
            <person name="Clark L."/>
            <person name="Doggett J."/>
            <person name="Hall S."/>
            <person name="Kay M."/>
            <person name="Lennard N."/>
            <person name="McLay K."/>
            <person name="Mayes R."/>
            <person name="Pettett A."/>
            <person name="Rajandream M.A."/>
            <person name="Lyne M."/>
            <person name="Benes V."/>
            <person name="Rechmann S."/>
            <person name="Borkova D."/>
            <person name="Bloecker H."/>
            <person name="Scharfe M."/>
            <person name="Grimm M."/>
            <person name="Loehnert T.-H."/>
            <person name="Dose S."/>
            <person name="de Haan M."/>
            <person name="Maarse A.C."/>
            <person name="Schaefer M."/>
            <person name="Mueller-Auer S."/>
            <person name="Gabel C."/>
            <person name="Fuchs M."/>
            <person name="Fartmann B."/>
            <person name="Granderath K."/>
            <person name="Dauner D."/>
            <person name="Herzl A."/>
            <person name="Neumann S."/>
            <person name="Argiriou A."/>
            <person name="Vitale D."/>
            <person name="Liguori R."/>
            <person name="Piravandi E."/>
            <person name="Massenet O."/>
            <person name="Quigley F."/>
            <person name="Clabauld G."/>
            <person name="Muendlein A."/>
            <person name="Felber R."/>
            <person name="Schnabl S."/>
            <person name="Hiller R."/>
            <person name="Schmidt W."/>
            <person name="Lecharny A."/>
            <person name="Aubourg S."/>
            <person name="Chefdor F."/>
            <person name="Cooke R."/>
            <person name="Berger C."/>
            <person name="Monfort A."/>
            <person name="Casacuberta E."/>
            <person name="Gibbons T."/>
            <person name="Weber N."/>
            <person name="Vandenbol M."/>
            <person name="Bargues M."/>
            <person name="Terol J."/>
            <person name="Torres A."/>
            <person name="Perez-Perez A."/>
            <person name="Purnelle B."/>
            <person name="Bent E."/>
            <person name="Johnson S."/>
            <person name="Tacon D."/>
            <person name="Jesse T."/>
            <person name="Heijnen L."/>
            <person name="Schwarz S."/>
            <person name="Scholler P."/>
            <person name="Heber S."/>
            <person name="Francs P."/>
            <person name="Bielke C."/>
            <person name="Frishman D."/>
            <person name="Haase D."/>
            <person name="Lemcke K."/>
            <person name="Mewes H.-W."/>
            <person name="Stocker S."/>
            <person name="Zaccaria P."/>
            <person name="Bevan M."/>
            <person name="Wilson R.K."/>
            <person name="de la Bastide M."/>
            <person name="Habermann K."/>
            <person name="Parnell L."/>
            <person name="Dedhia N."/>
            <person name="Gnoj L."/>
            <person name="Schutz K."/>
            <person name="Huang E."/>
            <person name="Spiegel L."/>
            <person name="Sekhon M."/>
            <person name="Murray J."/>
            <person name="Sheet P."/>
            <person name="Cordes M."/>
            <person name="Abu-Threideh J."/>
            <person name="Stoneking T."/>
            <person name="Kalicki J."/>
            <person name="Graves T."/>
            <person name="Harmon G."/>
            <person name="Edwards J."/>
            <person name="Latreille P."/>
            <person name="Courtney L."/>
            <person name="Cloud J."/>
            <person name="Abbott A."/>
            <person name="Scott K."/>
            <person name="Johnson D."/>
            <person name="Minx P."/>
            <person name="Bentley D."/>
            <person name="Fulton B."/>
            <person name="Miller N."/>
            <person name="Greco T."/>
            <person name="Kemp K."/>
            <person name="Kramer J."/>
            <person name="Fulton L."/>
            <person name="Mardis E."/>
            <person name="Dante M."/>
            <person name="Pepin K."/>
            <person name="Hillier L.W."/>
            <person name="Nelson J."/>
            <person name="Spieth J."/>
            <person name="Ryan E."/>
            <person name="Andrews S."/>
            <person name="Geisel C."/>
            <person name="Layman D."/>
            <person name="Du H."/>
            <person name="Ali J."/>
            <person name="Berghoff A."/>
            <person name="Jones K."/>
            <person name="Drone K."/>
            <person name="Cotton M."/>
            <person name="Joshu C."/>
            <person name="Antonoiu B."/>
            <person name="Zidanic M."/>
            <person name="Strong C."/>
            <person name="Sun H."/>
            <person name="Lamar B."/>
            <person name="Yordan C."/>
            <person name="Ma P."/>
            <person name="Zhong J."/>
            <person name="Preston R."/>
            <person name="Vil D."/>
            <person name="Shekher M."/>
            <person name="Matero A."/>
            <person name="Shah R."/>
            <person name="Swaby I.K."/>
            <person name="O'Shaughnessy A."/>
            <person name="Rodriguez M."/>
            <person name="Hoffman J."/>
            <person name="Till S."/>
            <person name="Granat S."/>
            <person name="Shohdy N."/>
            <person name="Hasegawa A."/>
            <person name="Hameed A."/>
            <person name="Lodhi M."/>
            <person name="Johnson A."/>
            <person name="Chen E."/>
            <person name="Marra M.A."/>
            <person name="Martienssen R."/>
            <person name="McCombie W.R."/>
        </authorList>
    </citation>
    <scope>NUCLEOTIDE SEQUENCE [LARGE SCALE GENOMIC DNA]</scope>
    <source>
        <strain>cv. Columbia</strain>
    </source>
</reference>
<reference key="2">
    <citation type="journal article" date="2017" name="Plant J.">
        <title>Araport11: a complete reannotation of the Arabidopsis thaliana reference genome.</title>
        <authorList>
            <person name="Cheng C.Y."/>
            <person name="Krishnakumar V."/>
            <person name="Chan A.P."/>
            <person name="Thibaud-Nissen F."/>
            <person name="Schobel S."/>
            <person name="Town C.D."/>
        </authorList>
    </citation>
    <scope>GENOME REANNOTATION</scope>
    <source>
        <strain>cv. Columbia</strain>
    </source>
</reference>
<reference key="3">
    <citation type="journal article" date="2003" name="Science">
        <title>Empirical analysis of transcriptional activity in the Arabidopsis genome.</title>
        <authorList>
            <person name="Yamada K."/>
            <person name="Lim J."/>
            <person name="Dale J.M."/>
            <person name="Chen H."/>
            <person name="Shinn P."/>
            <person name="Palm C.J."/>
            <person name="Southwick A.M."/>
            <person name="Wu H.C."/>
            <person name="Kim C.J."/>
            <person name="Nguyen M."/>
            <person name="Pham P.K."/>
            <person name="Cheuk R.F."/>
            <person name="Karlin-Newmann G."/>
            <person name="Liu S.X."/>
            <person name="Lam B."/>
            <person name="Sakano H."/>
            <person name="Wu T."/>
            <person name="Yu G."/>
            <person name="Miranda M."/>
            <person name="Quach H.L."/>
            <person name="Tripp M."/>
            <person name="Chang C.H."/>
            <person name="Lee J.M."/>
            <person name="Toriumi M.J."/>
            <person name="Chan M.M."/>
            <person name="Tang C.C."/>
            <person name="Onodera C.S."/>
            <person name="Deng J.M."/>
            <person name="Akiyama K."/>
            <person name="Ansari Y."/>
            <person name="Arakawa T."/>
            <person name="Banh J."/>
            <person name="Banno F."/>
            <person name="Bowser L."/>
            <person name="Brooks S.Y."/>
            <person name="Carninci P."/>
            <person name="Chao Q."/>
            <person name="Choy N."/>
            <person name="Enju A."/>
            <person name="Goldsmith A.D."/>
            <person name="Gurjal M."/>
            <person name="Hansen N.F."/>
            <person name="Hayashizaki Y."/>
            <person name="Johnson-Hopson C."/>
            <person name="Hsuan V.W."/>
            <person name="Iida K."/>
            <person name="Karnes M."/>
            <person name="Khan S."/>
            <person name="Koesema E."/>
            <person name="Ishida J."/>
            <person name="Jiang P.X."/>
            <person name="Jones T."/>
            <person name="Kawai J."/>
            <person name="Kamiya A."/>
            <person name="Meyers C."/>
            <person name="Nakajima M."/>
            <person name="Narusaka M."/>
            <person name="Seki M."/>
            <person name="Sakurai T."/>
            <person name="Satou M."/>
            <person name="Tamse R."/>
            <person name="Vaysberg M."/>
            <person name="Wallender E.K."/>
            <person name="Wong C."/>
            <person name="Yamamura Y."/>
            <person name="Yuan S."/>
            <person name="Shinozaki K."/>
            <person name="Davis R.W."/>
            <person name="Theologis A."/>
            <person name="Ecker J.R."/>
        </authorList>
    </citation>
    <scope>NUCLEOTIDE SEQUENCE [LARGE SCALE MRNA]</scope>
    <source>
        <strain>cv. Columbia</strain>
    </source>
</reference>
<reference key="4">
    <citation type="journal article" date="2006" name="Proc. Natl. Acad. Sci. U.S.A.">
        <title>Cloning of DOG1, a quantitative trait locus controlling seed dormancy in Arabidopsis.</title>
        <authorList>
            <person name="Bentsink L."/>
            <person name="Jowett J."/>
            <person name="Hanhart C.J."/>
            <person name="Koornneef M."/>
        </authorList>
    </citation>
    <scope>GENE FAMILY</scope>
    <scope>NOMENCLATURE</scope>
    <scope>DISRUPTION PHENOTYPE</scope>
</reference>
<sequence>MSKMRNLVEEKFLEFYESWVIQLELYLHQLLIAHNNNTMSETELRHLISKLTTHHKAYYTAKWAAIREDVLAFFGSVWLNPLENACSWLTGWKPSMVFRMVDRLRKSRVVLVEAQVKKLEELRVKTKFDEQKIEREMERYQVAMADRKMVELARLGCHVGGESVMVVEAAVRGLSMGLEKMVKAADCVRLKTLKGILDILTPPQCVEFLAAAATFQVQLRRWGNRRHYVTHS</sequence>
<protein>
    <recommendedName>
        <fullName evidence="3">Protein DOG1-like 4</fullName>
    </recommendedName>
</protein>
<proteinExistence type="evidence at protein level"/>
<gene>
    <name evidence="3" type="primary">DOGL4</name>
    <name evidence="5" type="ordered locus">At4g18650</name>
    <name evidence="7" type="ORF">F28A21.60</name>
</gene>
<keyword id="KW-1185">Reference proteome</keyword>
<name>DOGL4_ARATH</name>
<feature type="chain" id="PRO_0000437689" description="Protein DOG1-like 4">
    <location>
        <begin position="1"/>
        <end position="232"/>
    </location>
</feature>
<feature type="domain" description="DOG1" evidence="1">
    <location>
        <begin position="9"/>
        <end position="229"/>
    </location>
</feature>
<comment type="interaction">
    <interactant intactId="EBI-1238377">
        <id>Q84JC2</id>
    </interactant>
    <interactant intactId="EBI-4473692">
        <id>O80575</id>
        <label>At2g44050</label>
    </interactant>
    <organismsDiffer>false</organismsDiffer>
    <experiments>3</experiments>
</comment>
<comment type="interaction">
    <interactant intactId="EBI-1238377">
        <id>Q84JC2</id>
    </interactant>
    <interactant intactId="EBI-15681313">
        <id>Q9LF53</id>
        <label>RGL3</label>
    </interactant>
    <organismsDiffer>false</organismsDiffer>
    <experiments>3</experiments>
</comment>
<comment type="disruption phenotype">
    <text evidence="2">No germination phenotype.</text>
</comment>
<comment type="sequence caution" evidence="4">
    <conflict type="erroneous initiation">
        <sequence resource="EMBL-CDS" id="CAB37450"/>
    </conflict>
    <text>Truncated N-terminus.</text>
</comment>
<comment type="sequence caution" evidence="4">
    <conflict type="erroneous initiation">
        <sequence resource="EMBL-CDS" id="CAB78867"/>
    </conflict>
    <text>Truncated N-terminus.</text>
</comment>